<name>3BHST_VAR67</name>
<comment type="domain">
    <text>Corresponds to the N-terminal domain of vaccinia virus 3-beta-HSD.</text>
</comment>
<comment type="similarity">
    <text evidence="1">Belongs to the 3-beta-HSD family.</text>
</comment>
<organism>
    <name type="scientific">Variola virus (isolate Human/India/Ind3/1967)</name>
    <name type="common">VARV</name>
    <name type="synonym">Smallpox virus</name>
    <dbReference type="NCBI Taxonomy" id="587200"/>
    <lineage>
        <taxon>Viruses</taxon>
        <taxon>Varidnaviria</taxon>
        <taxon>Bamfordvirae</taxon>
        <taxon>Nucleocytoviricota</taxon>
        <taxon>Pokkesviricetes</taxon>
        <taxon>Chitovirales</taxon>
        <taxon>Poxviridae</taxon>
        <taxon>Chordopoxvirinae</taxon>
        <taxon>Orthopoxvirus</taxon>
        <taxon>Variola virus</taxon>
    </lineage>
</organism>
<sequence>MTVYAVTGGAEFLGRYIVKLLISADDVQEIRVINVVEDPQPLVSKVKVINYIQCDINDLIR</sequence>
<dbReference type="EMBL" id="X69198">
    <property type="protein sequence ID" value="CAA49097.1"/>
    <property type="molecule type" value="Genomic_DNA"/>
</dbReference>
<dbReference type="PIR" id="F36853">
    <property type="entry name" value="F36853"/>
</dbReference>
<dbReference type="RefSeq" id="NP_042200.1">
    <property type="nucleotide sequence ID" value="NC_001611.1"/>
</dbReference>
<dbReference type="SMR" id="P33794"/>
<dbReference type="GeneID" id="1486532"/>
<dbReference type="KEGG" id="vg:1486532"/>
<dbReference type="Proteomes" id="UP000002060">
    <property type="component" value="Segment"/>
</dbReference>
<dbReference type="GO" id="GO:0016616">
    <property type="term" value="F:oxidoreductase activity, acting on the CH-OH group of donors, NAD or NADP as acceptor"/>
    <property type="evidence" value="ECO:0007669"/>
    <property type="project" value="InterPro"/>
</dbReference>
<dbReference type="GO" id="GO:0006694">
    <property type="term" value="P:steroid biosynthetic process"/>
    <property type="evidence" value="ECO:0007669"/>
    <property type="project" value="InterPro"/>
</dbReference>
<dbReference type="Gene3D" id="3.40.50.720">
    <property type="entry name" value="NAD(P)-binding Rossmann-like Domain"/>
    <property type="match status" value="1"/>
</dbReference>
<dbReference type="InterPro" id="IPR002225">
    <property type="entry name" value="3Beta_OHSteriod_DH/Estase"/>
</dbReference>
<dbReference type="InterPro" id="IPR036291">
    <property type="entry name" value="NAD(P)-bd_dom_sf"/>
</dbReference>
<dbReference type="Pfam" id="PF01073">
    <property type="entry name" value="3Beta_HSD"/>
    <property type="match status" value="1"/>
</dbReference>
<dbReference type="SUPFAM" id="SSF51735">
    <property type="entry name" value="NAD(P)-binding Rossmann-fold domains"/>
    <property type="match status" value="1"/>
</dbReference>
<organismHost>
    <name type="scientific">Homo sapiens</name>
    <name type="common">Human</name>
    <dbReference type="NCBI Taxonomy" id="9606"/>
</organismHost>
<accession>P33794</accession>
<keyword id="KW-1185">Reference proteome</keyword>
<gene>
    <name type="ORF">A50L</name>
</gene>
<protein>
    <recommendedName>
        <fullName>Truncated 3-beta hydroxy-5-ene steroid dehydrogenase homolog</fullName>
    </recommendedName>
</protein>
<reference key="1">
    <citation type="journal article" date="1993" name="FEBS Lett.">
        <title>Genes of variola and vaccinia viruses necessary to overcome the host protective mechanisms.</title>
        <authorList>
            <person name="Shchelkunov S.N."/>
            <person name="Blinov V.M."/>
            <person name="Sandakhchiev L.S."/>
        </authorList>
    </citation>
    <scope>NUCLEOTIDE SEQUENCE [GENOMIC DNA]</scope>
    <source>
        <strain>India-1967 / Isolate Ind3</strain>
    </source>
</reference>
<evidence type="ECO:0000305" key="1"/>
<feature type="chain" id="PRO_0000087796" description="Truncated 3-beta hydroxy-5-ene steroid dehydrogenase homolog">
    <location>
        <begin position="1"/>
        <end position="61"/>
    </location>
</feature>
<proteinExistence type="inferred from homology"/>